<accession>Q9MTI8</accession>
<name>RK16_OENEH</name>
<proteinExistence type="inferred from homology"/>
<gene>
    <name evidence="1" type="primary">rpl16</name>
</gene>
<protein>
    <recommendedName>
        <fullName evidence="1">Large ribosomal subunit protein uL16c</fullName>
    </recommendedName>
    <alternativeName>
        <fullName evidence="2">50S ribosomal protein L16, chloroplastic</fullName>
    </alternativeName>
</protein>
<keyword id="KW-0150">Chloroplast</keyword>
<keyword id="KW-0934">Plastid</keyword>
<keyword id="KW-0687">Ribonucleoprotein</keyword>
<keyword id="KW-0689">Ribosomal protein</keyword>
<sequence>MLSPKRTRFRKQHRGRMRGISYRGNRICFGKYALQALEPAWITSRQIEAGRRAMTRNVRRGGKTWVRIFPDKPVTLRAAETRMGSGKGNPEYWVAVVKPGRILYEMGGVAENIARKAISIAASKMPIRTQFIISG</sequence>
<geneLocation type="chloroplast"/>
<evidence type="ECO:0000255" key="1">
    <source>
        <dbReference type="HAMAP-Rule" id="MF_01342"/>
    </source>
</evidence>
<evidence type="ECO:0000305" key="2"/>
<reference key="1">
    <citation type="journal article" date="2000" name="Mol. Gen. Genet.">
        <title>Complete nucleotide sequence of the Oenothera elata plastid chromosome, representing plastome I of the five distinguishable Euoenothera plastomes.</title>
        <authorList>
            <person name="Hupfer H."/>
            <person name="Swiatek M."/>
            <person name="Hornung S."/>
            <person name="Herrmann R.G."/>
            <person name="Maier R.M."/>
            <person name="Chiu W.-L."/>
            <person name="Sears B."/>
        </authorList>
    </citation>
    <scope>NUCLEOTIDE SEQUENCE [LARGE SCALE GENOMIC DNA]</scope>
    <source>
        <strain>cv. Johansen</strain>
    </source>
</reference>
<feature type="chain" id="PRO_0000062298" description="Large ribosomal subunit protein uL16c">
    <location>
        <begin position="1"/>
        <end position="135"/>
    </location>
</feature>
<organism>
    <name type="scientific">Oenothera elata subsp. hookeri</name>
    <name type="common">Hooker's evening primrose</name>
    <name type="synonym">Oenothera hookeri</name>
    <dbReference type="NCBI Taxonomy" id="85636"/>
    <lineage>
        <taxon>Eukaryota</taxon>
        <taxon>Viridiplantae</taxon>
        <taxon>Streptophyta</taxon>
        <taxon>Embryophyta</taxon>
        <taxon>Tracheophyta</taxon>
        <taxon>Spermatophyta</taxon>
        <taxon>Magnoliopsida</taxon>
        <taxon>eudicotyledons</taxon>
        <taxon>Gunneridae</taxon>
        <taxon>Pentapetalae</taxon>
        <taxon>rosids</taxon>
        <taxon>malvids</taxon>
        <taxon>Myrtales</taxon>
        <taxon>Onagraceae</taxon>
        <taxon>Onagroideae</taxon>
        <taxon>Onagreae</taxon>
        <taxon>Oenothera</taxon>
    </lineage>
</organism>
<comment type="subunit">
    <text evidence="1">Part of the 50S ribosomal subunit.</text>
</comment>
<comment type="subcellular location">
    <subcellularLocation>
        <location>Plastid</location>
        <location>Chloroplast</location>
    </subcellularLocation>
</comment>
<comment type="similarity">
    <text evidence="1">Belongs to the universal ribosomal protein uL16 family.</text>
</comment>
<dbReference type="EMBL" id="AJ271079">
    <property type="protein sequence ID" value="CAB67197.1"/>
    <property type="molecule type" value="Genomic_DNA"/>
</dbReference>
<dbReference type="RefSeq" id="NP_084730.1">
    <property type="nucleotide sequence ID" value="NC_002693.2"/>
</dbReference>
<dbReference type="SMR" id="Q9MTI8"/>
<dbReference type="GeneID" id="802821"/>
<dbReference type="GO" id="GO:0009507">
    <property type="term" value="C:chloroplast"/>
    <property type="evidence" value="ECO:0007669"/>
    <property type="project" value="UniProtKB-SubCell"/>
</dbReference>
<dbReference type="GO" id="GO:0005762">
    <property type="term" value="C:mitochondrial large ribosomal subunit"/>
    <property type="evidence" value="ECO:0007669"/>
    <property type="project" value="TreeGrafter"/>
</dbReference>
<dbReference type="GO" id="GO:0019843">
    <property type="term" value="F:rRNA binding"/>
    <property type="evidence" value="ECO:0007669"/>
    <property type="project" value="InterPro"/>
</dbReference>
<dbReference type="GO" id="GO:0003735">
    <property type="term" value="F:structural constituent of ribosome"/>
    <property type="evidence" value="ECO:0007669"/>
    <property type="project" value="InterPro"/>
</dbReference>
<dbReference type="GO" id="GO:0032543">
    <property type="term" value="P:mitochondrial translation"/>
    <property type="evidence" value="ECO:0007669"/>
    <property type="project" value="TreeGrafter"/>
</dbReference>
<dbReference type="CDD" id="cd01433">
    <property type="entry name" value="Ribosomal_L16_L10e"/>
    <property type="match status" value="1"/>
</dbReference>
<dbReference type="FunFam" id="3.90.1170.10:FF:000001">
    <property type="entry name" value="50S ribosomal protein L16"/>
    <property type="match status" value="1"/>
</dbReference>
<dbReference type="Gene3D" id="3.90.1170.10">
    <property type="entry name" value="Ribosomal protein L10e/L16"/>
    <property type="match status" value="1"/>
</dbReference>
<dbReference type="HAMAP" id="MF_01342">
    <property type="entry name" value="Ribosomal_uL16"/>
    <property type="match status" value="1"/>
</dbReference>
<dbReference type="InterPro" id="IPR047873">
    <property type="entry name" value="Ribosomal_uL16"/>
</dbReference>
<dbReference type="InterPro" id="IPR000114">
    <property type="entry name" value="Ribosomal_uL16_bact-type"/>
</dbReference>
<dbReference type="InterPro" id="IPR020798">
    <property type="entry name" value="Ribosomal_uL16_CS"/>
</dbReference>
<dbReference type="InterPro" id="IPR016180">
    <property type="entry name" value="Ribosomal_uL16_dom"/>
</dbReference>
<dbReference type="InterPro" id="IPR036920">
    <property type="entry name" value="Ribosomal_uL16_sf"/>
</dbReference>
<dbReference type="NCBIfam" id="TIGR01164">
    <property type="entry name" value="rplP_bact"/>
    <property type="match status" value="1"/>
</dbReference>
<dbReference type="PANTHER" id="PTHR12220">
    <property type="entry name" value="50S/60S RIBOSOMAL PROTEIN L16"/>
    <property type="match status" value="1"/>
</dbReference>
<dbReference type="PANTHER" id="PTHR12220:SF13">
    <property type="entry name" value="LARGE RIBOSOMAL SUBUNIT PROTEIN UL16M"/>
    <property type="match status" value="1"/>
</dbReference>
<dbReference type="Pfam" id="PF00252">
    <property type="entry name" value="Ribosomal_L16"/>
    <property type="match status" value="1"/>
</dbReference>
<dbReference type="PRINTS" id="PR00060">
    <property type="entry name" value="RIBOSOMALL16"/>
</dbReference>
<dbReference type="SUPFAM" id="SSF54686">
    <property type="entry name" value="Ribosomal protein L16p/L10e"/>
    <property type="match status" value="1"/>
</dbReference>
<dbReference type="PROSITE" id="PS00701">
    <property type="entry name" value="RIBOSOMAL_L16_2"/>
    <property type="match status" value="1"/>
</dbReference>